<proteinExistence type="inferred from homology"/>
<keyword id="KW-0326">Glycosidase</keyword>
<keyword id="KW-0378">Hydrolase</keyword>
<keyword id="KW-0479">Metal-binding</keyword>
<keyword id="KW-0862">Zinc</keyword>
<gene>
    <name evidence="2" type="primary">bgaB</name>
    <name type="ordered locus">GYMC61_0530</name>
</gene>
<feature type="chain" id="PRO_0000407689" description="Beta-galactosidase BgaB">
    <location>
        <begin position="1"/>
        <end position="672"/>
    </location>
</feature>
<feature type="active site" description="Proton donor" evidence="1">
    <location>
        <position position="148"/>
    </location>
</feature>
<feature type="active site" description="Nucleophile" evidence="1">
    <location>
        <position position="303"/>
    </location>
</feature>
<feature type="binding site" evidence="1">
    <location>
        <position position="109"/>
    </location>
    <ligand>
        <name>substrate</name>
    </ligand>
</feature>
<feature type="binding site" evidence="1">
    <location>
        <position position="113"/>
    </location>
    <ligand>
        <name>Zn(2+)</name>
        <dbReference type="ChEBI" id="CHEBI:29105"/>
    </ligand>
</feature>
<feature type="binding site" evidence="1">
    <location>
        <position position="147"/>
    </location>
    <ligand>
        <name>substrate</name>
    </ligand>
</feature>
<feature type="binding site" evidence="1">
    <location>
        <position position="156"/>
    </location>
    <ligand>
        <name>Zn(2+)</name>
        <dbReference type="ChEBI" id="CHEBI:29105"/>
    </ligand>
</feature>
<feature type="binding site" evidence="1">
    <location>
        <position position="158"/>
    </location>
    <ligand>
        <name>Zn(2+)</name>
        <dbReference type="ChEBI" id="CHEBI:29105"/>
    </ligand>
</feature>
<feature type="binding site" evidence="1">
    <location>
        <position position="161"/>
    </location>
    <ligand>
        <name>Zn(2+)</name>
        <dbReference type="ChEBI" id="CHEBI:29105"/>
    </ligand>
</feature>
<feature type="binding site" evidence="1">
    <location>
        <position position="311"/>
    </location>
    <ligand>
        <name>substrate</name>
    </ligand>
</feature>
<feature type="binding site" evidence="1">
    <location>
        <begin position="351"/>
        <end position="354"/>
    </location>
    <ligand>
        <name>substrate</name>
    </ligand>
</feature>
<dbReference type="EC" id="3.2.1.23"/>
<dbReference type="EMBL" id="CP001794">
    <property type="protein sequence ID" value="ACX77212.1"/>
    <property type="molecule type" value="Genomic_DNA"/>
</dbReference>
<dbReference type="SMR" id="C9S0R2"/>
<dbReference type="CAZy" id="GH42">
    <property type="family name" value="Glycoside Hydrolase Family 42"/>
</dbReference>
<dbReference type="KEGG" id="gyc:GYMC61_0530"/>
<dbReference type="HOGENOM" id="CLU_012430_1_1_9"/>
<dbReference type="GO" id="GO:0009341">
    <property type="term" value="C:beta-galactosidase complex"/>
    <property type="evidence" value="ECO:0007669"/>
    <property type="project" value="InterPro"/>
</dbReference>
<dbReference type="GO" id="GO:0004565">
    <property type="term" value="F:beta-galactosidase activity"/>
    <property type="evidence" value="ECO:0007669"/>
    <property type="project" value="UniProtKB-EC"/>
</dbReference>
<dbReference type="GO" id="GO:0046872">
    <property type="term" value="F:metal ion binding"/>
    <property type="evidence" value="ECO:0007669"/>
    <property type="project" value="UniProtKB-KW"/>
</dbReference>
<dbReference type="GO" id="GO:0006012">
    <property type="term" value="P:galactose metabolic process"/>
    <property type="evidence" value="ECO:0007669"/>
    <property type="project" value="InterPro"/>
</dbReference>
<dbReference type="CDD" id="cd03143">
    <property type="entry name" value="A4_beta-galactosidase_middle_domain"/>
    <property type="match status" value="1"/>
</dbReference>
<dbReference type="Gene3D" id="3.40.50.880">
    <property type="match status" value="1"/>
</dbReference>
<dbReference type="Gene3D" id="3.20.20.80">
    <property type="entry name" value="Glycosidases"/>
    <property type="match status" value="1"/>
</dbReference>
<dbReference type="Gene3D" id="2.60.40.1180">
    <property type="entry name" value="Golgi alpha-mannosidase II"/>
    <property type="match status" value="1"/>
</dbReference>
<dbReference type="InterPro" id="IPR013739">
    <property type="entry name" value="Beta_galactosidase_C"/>
</dbReference>
<dbReference type="InterPro" id="IPR013738">
    <property type="entry name" value="Beta_galactosidase_Trimer"/>
</dbReference>
<dbReference type="InterPro" id="IPR029062">
    <property type="entry name" value="Class_I_gatase-like"/>
</dbReference>
<dbReference type="InterPro" id="IPR003476">
    <property type="entry name" value="Glyco_hydro_42"/>
</dbReference>
<dbReference type="InterPro" id="IPR013529">
    <property type="entry name" value="Glyco_hydro_42_N"/>
</dbReference>
<dbReference type="InterPro" id="IPR013780">
    <property type="entry name" value="Glyco_hydro_b"/>
</dbReference>
<dbReference type="InterPro" id="IPR017853">
    <property type="entry name" value="Glycoside_hydrolase_SF"/>
</dbReference>
<dbReference type="PANTHER" id="PTHR36447">
    <property type="entry name" value="BETA-GALACTOSIDASE GANA"/>
    <property type="match status" value="1"/>
</dbReference>
<dbReference type="PANTHER" id="PTHR36447:SF1">
    <property type="entry name" value="BETA-GALACTOSIDASE GANA"/>
    <property type="match status" value="1"/>
</dbReference>
<dbReference type="Pfam" id="PF02449">
    <property type="entry name" value="Glyco_hydro_42"/>
    <property type="match status" value="1"/>
</dbReference>
<dbReference type="Pfam" id="PF08533">
    <property type="entry name" value="Glyco_hydro_42C"/>
    <property type="match status" value="1"/>
</dbReference>
<dbReference type="Pfam" id="PF08532">
    <property type="entry name" value="Glyco_hydro_42M"/>
    <property type="match status" value="1"/>
</dbReference>
<dbReference type="PIRSF" id="PIRSF001084">
    <property type="entry name" value="B-galactosidase"/>
    <property type="match status" value="1"/>
</dbReference>
<dbReference type="SUPFAM" id="SSF51445">
    <property type="entry name" value="(Trans)glycosidases"/>
    <property type="match status" value="1"/>
</dbReference>
<dbReference type="SUPFAM" id="SSF52317">
    <property type="entry name" value="Class I glutamine amidotransferase-like"/>
    <property type="match status" value="1"/>
</dbReference>
<name>BGAL_GEOSY</name>
<protein>
    <recommendedName>
        <fullName>Beta-galactosidase BgaB</fullName>
        <shortName evidence="2">Beta-gal</shortName>
        <ecNumber>3.2.1.23</ecNumber>
    </recommendedName>
    <alternativeName>
        <fullName evidence="2">Beta-galactosidase I</fullName>
    </alternativeName>
    <alternativeName>
        <fullName evidence="2">Lactase</fullName>
    </alternativeName>
</protein>
<reference key="1">
    <citation type="submission" date="2009-10" db="EMBL/GenBank/DDBJ databases">
        <title>Complete sequence of chromosome of Geobacillus sp. Y412MC61.</title>
        <authorList>
            <consortium name="US DOE Joint Genome Institute"/>
            <person name="Lucas S."/>
            <person name="Copeland A."/>
            <person name="Lapidus A."/>
            <person name="Glavina del Rio T."/>
            <person name="Tice H."/>
            <person name="Bruce D."/>
            <person name="Goodwin L."/>
            <person name="Pitluck S."/>
            <person name="Chertkov O."/>
            <person name="Brettin T."/>
            <person name="Detter J.C."/>
            <person name="Han C."/>
            <person name="Larimer F."/>
            <person name="Land M."/>
            <person name="Hauser L."/>
            <person name="Kyrpides N."/>
            <person name="Mikhailova N."/>
            <person name="Brumm P."/>
            <person name="Mead D."/>
        </authorList>
    </citation>
    <scope>NUCLEOTIDE SEQUENCE [LARGE SCALE GENOMIC DNA]</scope>
    <source>
        <strain evidence="4">Y412MC61</strain>
    </source>
</reference>
<accession>C9S0R2</accession>
<comment type="catalytic activity">
    <reaction evidence="2">
        <text>Hydrolysis of terminal non-reducing beta-D-galactose residues in beta-D-galactosides.</text>
        <dbReference type="EC" id="3.2.1.23"/>
    </reaction>
</comment>
<comment type="similarity">
    <text evidence="3">Belongs to the glycosyl hydrolase 42 family.</text>
</comment>
<evidence type="ECO:0000250" key="1">
    <source>
        <dbReference type="UniProtKB" id="O69315"/>
    </source>
</evidence>
<evidence type="ECO:0000250" key="2">
    <source>
        <dbReference type="UniProtKB" id="P19668"/>
    </source>
</evidence>
<evidence type="ECO:0000255" key="3"/>
<evidence type="ECO:0000312" key="4">
    <source>
        <dbReference type="EMBL" id="ACX77212.1"/>
    </source>
</evidence>
<organism>
    <name type="scientific">Geobacillus sp. (strain Y412MC61)</name>
    <dbReference type="NCBI Taxonomy" id="544556"/>
    <lineage>
        <taxon>Bacteria</taxon>
        <taxon>Bacillati</taxon>
        <taxon>Bacillota</taxon>
        <taxon>Bacilli</taxon>
        <taxon>Bacillales</taxon>
        <taxon>Anoxybacillaceae</taxon>
        <taxon>Geobacillus</taxon>
    </lineage>
</organism>
<sequence length="672" mass="78015">MNVLSSICYGGDYNPEQWPEEIWYEDAKLMQKAGVNLVSLGIFSWSKIEPSDGVFDFEWLDKVIDILYDHGVYINLGTATATTPAWFVKKYPDSLPIDESGVIFSFGSRQHYCPNHPQLITHIKRLVRAIAERYKNHPALKMWHVNNEYACHVSKCFCENCAVAFRKWLKERYKTIDELNERWGTNFWGQRYNHWDEINPPRKAPTFINPSQELDYYRFMNDSILKLFLTEKEILRGVTPDIPVSTNFMGSFKPLNYFQWAQHVDIVTWDSYPDPREGLPIQHAMMNDLMRSLRKGQPFILMEQVTSHVNWRDINVPKPPGVMRLWSYATIARGADGIMFFQWRQSRAGAEKFHGAMVPHFLNENNRIYREVTQLGQELKKLDCLVGSRIKAEVAIIFDWENWWAVELSSKPHNKLRYIPIVEAYYRELYKRNIAVDFVRPSDDLTKYKVVIAPMLYMVKEGEDENLRQFVANGGTLIVSFFSGIVDENDRVHLGGYPGPLRDILGIFVEEFVPYPETKVNKIYSNDGEYDCTTWADIIRLEGAEPLATFKGDWYAGLPAVTRNCYGKGEGIYVGTYPDSNYLGRLLEQVFAKHHINPILEVAENVEVQQRETDEWKYLIIINHNDYEVTLSLPEDKIYQNMIDGKCFRGGELRIQGVDVAVLREHDEAGKV</sequence>